<organism>
    <name type="scientific">Buchnera aphidicola subsp. Acyrthosiphon pisum (strain 5A)</name>
    <dbReference type="NCBI Taxonomy" id="563178"/>
    <lineage>
        <taxon>Bacteria</taxon>
        <taxon>Pseudomonadati</taxon>
        <taxon>Pseudomonadota</taxon>
        <taxon>Gammaproteobacteria</taxon>
        <taxon>Enterobacterales</taxon>
        <taxon>Erwiniaceae</taxon>
        <taxon>Buchnera</taxon>
    </lineage>
</organism>
<proteinExistence type="inferred from homology"/>
<accession>B8D9U7</accession>
<dbReference type="EMBL" id="CP001161">
    <property type="protein sequence ID" value="ACL30868.1"/>
    <property type="molecule type" value="Genomic_DNA"/>
</dbReference>
<dbReference type="RefSeq" id="WP_009874475.1">
    <property type="nucleotide sequence ID" value="NC_011833.1"/>
</dbReference>
<dbReference type="SMR" id="B8D9U7"/>
<dbReference type="KEGG" id="bap:BUAP5A_517"/>
<dbReference type="HOGENOM" id="CLU_044142_4_1_6"/>
<dbReference type="OrthoDB" id="9806135at2"/>
<dbReference type="Proteomes" id="UP000006904">
    <property type="component" value="Chromosome"/>
</dbReference>
<dbReference type="GO" id="GO:0022625">
    <property type="term" value="C:cytosolic large ribosomal subunit"/>
    <property type="evidence" value="ECO:0007669"/>
    <property type="project" value="TreeGrafter"/>
</dbReference>
<dbReference type="GO" id="GO:0019843">
    <property type="term" value="F:rRNA binding"/>
    <property type="evidence" value="ECO:0007669"/>
    <property type="project" value="UniProtKB-UniRule"/>
</dbReference>
<dbReference type="GO" id="GO:0003735">
    <property type="term" value="F:structural constituent of ribosome"/>
    <property type="evidence" value="ECO:0007669"/>
    <property type="project" value="InterPro"/>
</dbReference>
<dbReference type="GO" id="GO:0006412">
    <property type="term" value="P:translation"/>
    <property type="evidence" value="ECO:0007669"/>
    <property type="project" value="UniProtKB-UniRule"/>
</dbReference>
<dbReference type="FunFam" id="2.40.30.10:FF:000004">
    <property type="entry name" value="50S ribosomal protein L3"/>
    <property type="match status" value="1"/>
</dbReference>
<dbReference type="FunFam" id="3.30.160.810:FF:000001">
    <property type="entry name" value="50S ribosomal protein L3"/>
    <property type="match status" value="1"/>
</dbReference>
<dbReference type="Gene3D" id="3.30.160.810">
    <property type="match status" value="1"/>
</dbReference>
<dbReference type="Gene3D" id="2.40.30.10">
    <property type="entry name" value="Translation factors"/>
    <property type="match status" value="1"/>
</dbReference>
<dbReference type="HAMAP" id="MF_01325_B">
    <property type="entry name" value="Ribosomal_uL3_B"/>
    <property type="match status" value="1"/>
</dbReference>
<dbReference type="InterPro" id="IPR000597">
    <property type="entry name" value="Ribosomal_uL3"/>
</dbReference>
<dbReference type="InterPro" id="IPR019927">
    <property type="entry name" value="Ribosomal_uL3_bac/org-type"/>
</dbReference>
<dbReference type="InterPro" id="IPR019926">
    <property type="entry name" value="Ribosomal_uL3_CS"/>
</dbReference>
<dbReference type="InterPro" id="IPR009000">
    <property type="entry name" value="Transl_B-barrel_sf"/>
</dbReference>
<dbReference type="NCBIfam" id="TIGR03625">
    <property type="entry name" value="L3_bact"/>
    <property type="match status" value="1"/>
</dbReference>
<dbReference type="PANTHER" id="PTHR11229">
    <property type="entry name" value="50S RIBOSOMAL PROTEIN L3"/>
    <property type="match status" value="1"/>
</dbReference>
<dbReference type="PANTHER" id="PTHR11229:SF16">
    <property type="entry name" value="LARGE RIBOSOMAL SUBUNIT PROTEIN UL3C"/>
    <property type="match status" value="1"/>
</dbReference>
<dbReference type="Pfam" id="PF00297">
    <property type="entry name" value="Ribosomal_L3"/>
    <property type="match status" value="1"/>
</dbReference>
<dbReference type="SUPFAM" id="SSF50447">
    <property type="entry name" value="Translation proteins"/>
    <property type="match status" value="1"/>
</dbReference>
<dbReference type="PROSITE" id="PS00474">
    <property type="entry name" value="RIBOSOMAL_L3"/>
    <property type="match status" value="1"/>
</dbReference>
<feature type="chain" id="PRO_1000165873" description="Large ribosomal subunit protein uL3">
    <location>
        <begin position="1"/>
        <end position="209"/>
    </location>
</feature>
<feature type="modified residue" description="N5-methylglutamine" evidence="1">
    <location>
        <position position="150"/>
    </location>
</feature>
<sequence length="209" mass="22861">MIGLVGKKIGMTRIFTEEGTSIPVTVIELKENRITQVKNINTDLYCAIQVTTGIKKSNRLNKPQSGHFLKSGVTPGRGLWEFRTDKNNNFKIGQSITINIFNNVKKVDITGISKGKGFSGTVKRWNFHTQDATHGNSLSHRVPGSIGQNQTPGRVFKGKKMAGQLGNTRVTVQSLNIVRIDERRNLLLVKGAVPGATGSDLIVKPAIKV</sequence>
<protein>
    <recommendedName>
        <fullName evidence="1">Large ribosomal subunit protein uL3</fullName>
    </recommendedName>
    <alternativeName>
        <fullName evidence="2">50S ribosomal protein L3</fullName>
    </alternativeName>
</protein>
<keyword id="KW-0488">Methylation</keyword>
<keyword id="KW-0687">Ribonucleoprotein</keyword>
<keyword id="KW-0689">Ribosomal protein</keyword>
<keyword id="KW-0694">RNA-binding</keyword>
<keyword id="KW-0699">rRNA-binding</keyword>
<gene>
    <name evidence="1" type="primary">rplC</name>
    <name type="ordered locus">BUAP5A_517</name>
</gene>
<reference key="1">
    <citation type="journal article" date="2009" name="Science">
        <title>The dynamics and time scale of ongoing genomic erosion in symbiotic bacteria.</title>
        <authorList>
            <person name="Moran N.A."/>
            <person name="McLaughlin H.J."/>
            <person name="Sorek R."/>
        </authorList>
    </citation>
    <scope>NUCLEOTIDE SEQUENCE [LARGE SCALE GENOMIC DNA]</scope>
    <source>
        <strain>5A</strain>
    </source>
</reference>
<name>RL3_BUCA5</name>
<evidence type="ECO:0000255" key="1">
    <source>
        <dbReference type="HAMAP-Rule" id="MF_01325"/>
    </source>
</evidence>
<evidence type="ECO:0000305" key="2"/>
<comment type="function">
    <text evidence="1">One of the primary rRNA binding proteins, it binds directly near the 3'-end of the 23S rRNA, where it nucleates assembly of the 50S subunit.</text>
</comment>
<comment type="subunit">
    <text evidence="1">Part of the 50S ribosomal subunit. Forms a cluster with proteins L14 and L19.</text>
</comment>
<comment type="PTM">
    <text evidence="1">Methylated by PrmB.</text>
</comment>
<comment type="similarity">
    <text evidence="1">Belongs to the universal ribosomal protein uL3 family.</text>
</comment>